<accession>B1KHG9</accession>
<name>CMOA_SHEWM</name>
<comment type="function">
    <text evidence="1">Catalyzes the conversion of S-adenosyl-L-methionine (SAM) to carboxy-S-adenosyl-L-methionine (Cx-SAM).</text>
</comment>
<comment type="catalytic activity">
    <reaction evidence="1">
        <text>prephenate + S-adenosyl-L-methionine = carboxy-S-adenosyl-L-methionine + 3-phenylpyruvate + H2O</text>
        <dbReference type="Rhea" id="RHEA:51692"/>
        <dbReference type="ChEBI" id="CHEBI:15377"/>
        <dbReference type="ChEBI" id="CHEBI:18005"/>
        <dbReference type="ChEBI" id="CHEBI:29934"/>
        <dbReference type="ChEBI" id="CHEBI:59789"/>
        <dbReference type="ChEBI" id="CHEBI:134278"/>
    </reaction>
</comment>
<comment type="subunit">
    <text evidence="1">Homodimer.</text>
</comment>
<comment type="similarity">
    <text evidence="1">Belongs to the class I-like SAM-binding methyltransferase superfamily. Cx-SAM synthase family.</text>
</comment>
<organism>
    <name type="scientific">Shewanella woodyi (strain ATCC 51908 / MS32)</name>
    <dbReference type="NCBI Taxonomy" id="392500"/>
    <lineage>
        <taxon>Bacteria</taxon>
        <taxon>Pseudomonadati</taxon>
        <taxon>Pseudomonadota</taxon>
        <taxon>Gammaproteobacteria</taxon>
        <taxon>Alteromonadales</taxon>
        <taxon>Shewanellaceae</taxon>
        <taxon>Shewanella</taxon>
    </lineage>
</organism>
<proteinExistence type="inferred from homology"/>
<reference key="1">
    <citation type="submission" date="2008-02" db="EMBL/GenBank/DDBJ databases">
        <title>Complete sequence of Shewanella woodyi ATCC 51908.</title>
        <authorList>
            <consortium name="US DOE Joint Genome Institute"/>
            <person name="Copeland A."/>
            <person name="Lucas S."/>
            <person name="Lapidus A."/>
            <person name="Glavina del Rio T."/>
            <person name="Dalin E."/>
            <person name="Tice H."/>
            <person name="Bruce D."/>
            <person name="Goodwin L."/>
            <person name="Pitluck S."/>
            <person name="Sims D."/>
            <person name="Brettin T."/>
            <person name="Detter J.C."/>
            <person name="Han C."/>
            <person name="Kuske C.R."/>
            <person name="Schmutz J."/>
            <person name="Larimer F."/>
            <person name="Land M."/>
            <person name="Hauser L."/>
            <person name="Kyrpides N."/>
            <person name="Lykidis A."/>
            <person name="Zhao J.-S."/>
            <person name="Richardson P."/>
        </authorList>
    </citation>
    <scope>NUCLEOTIDE SEQUENCE [LARGE SCALE GENOMIC DNA]</scope>
    <source>
        <strain>ATCC 51908 / MS32</strain>
    </source>
</reference>
<dbReference type="EC" id="2.1.3.-" evidence="1"/>
<dbReference type="EMBL" id="CP000961">
    <property type="protein sequence ID" value="ACA86854.1"/>
    <property type="molecule type" value="Genomic_DNA"/>
</dbReference>
<dbReference type="RefSeq" id="WP_012325194.1">
    <property type="nucleotide sequence ID" value="NC_010506.1"/>
</dbReference>
<dbReference type="SMR" id="B1KHG9"/>
<dbReference type="STRING" id="392500.Swoo_2577"/>
<dbReference type="KEGG" id="swd:Swoo_2577"/>
<dbReference type="eggNOG" id="COG2226">
    <property type="taxonomic scope" value="Bacteria"/>
</dbReference>
<dbReference type="HOGENOM" id="CLU_078475_0_0_6"/>
<dbReference type="Proteomes" id="UP000002168">
    <property type="component" value="Chromosome"/>
</dbReference>
<dbReference type="GO" id="GO:0016743">
    <property type="term" value="F:carboxyl- or carbamoyltransferase activity"/>
    <property type="evidence" value="ECO:0007669"/>
    <property type="project" value="UniProtKB-UniRule"/>
</dbReference>
<dbReference type="GO" id="GO:1904047">
    <property type="term" value="F:S-adenosyl-L-methionine binding"/>
    <property type="evidence" value="ECO:0007669"/>
    <property type="project" value="UniProtKB-UniRule"/>
</dbReference>
<dbReference type="GO" id="GO:0002098">
    <property type="term" value="P:tRNA wobble uridine modification"/>
    <property type="evidence" value="ECO:0007669"/>
    <property type="project" value="InterPro"/>
</dbReference>
<dbReference type="CDD" id="cd02440">
    <property type="entry name" value="AdoMet_MTases"/>
    <property type="match status" value="1"/>
</dbReference>
<dbReference type="Gene3D" id="3.40.50.150">
    <property type="entry name" value="Vaccinia Virus protein VP39"/>
    <property type="match status" value="1"/>
</dbReference>
<dbReference type="HAMAP" id="MF_01589">
    <property type="entry name" value="Cx_SAM_synthase"/>
    <property type="match status" value="1"/>
</dbReference>
<dbReference type="InterPro" id="IPR005271">
    <property type="entry name" value="CmoA"/>
</dbReference>
<dbReference type="InterPro" id="IPR041698">
    <property type="entry name" value="Methyltransf_25"/>
</dbReference>
<dbReference type="InterPro" id="IPR029063">
    <property type="entry name" value="SAM-dependent_MTases_sf"/>
</dbReference>
<dbReference type="NCBIfam" id="TIGR00740">
    <property type="entry name" value="carboxy-S-adenosyl-L-methionine synthase CmoA"/>
    <property type="match status" value="1"/>
</dbReference>
<dbReference type="NCBIfam" id="NF011995">
    <property type="entry name" value="PRK15451.1"/>
    <property type="match status" value="1"/>
</dbReference>
<dbReference type="PANTHER" id="PTHR43861:SF2">
    <property type="entry name" value="CARBOXY-S-ADENOSYL-L-METHIONINE SYNTHASE"/>
    <property type="match status" value="1"/>
</dbReference>
<dbReference type="PANTHER" id="PTHR43861">
    <property type="entry name" value="TRANS-ACONITATE 2-METHYLTRANSFERASE-RELATED"/>
    <property type="match status" value="1"/>
</dbReference>
<dbReference type="Pfam" id="PF13649">
    <property type="entry name" value="Methyltransf_25"/>
    <property type="match status" value="1"/>
</dbReference>
<dbReference type="PIRSF" id="PIRSF006325">
    <property type="entry name" value="MeTrfase_bac"/>
    <property type="match status" value="1"/>
</dbReference>
<dbReference type="SUPFAM" id="SSF53335">
    <property type="entry name" value="S-adenosyl-L-methionine-dependent methyltransferases"/>
    <property type="match status" value="1"/>
</dbReference>
<evidence type="ECO:0000255" key="1">
    <source>
        <dbReference type="HAMAP-Rule" id="MF_01589"/>
    </source>
</evidence>
<protein>
    <recommendedName>
        <fullName evidence="1">Carboxy-S-adenosyl-L-methionine synthase</fullName>
        <shortName evidence="1">Cx-SAM synthase</shortName>
        <ecNumber evidence="1">2.1.3.-</ecNumber>
    </recommendedName>
</protein>
<keyword id="KW-1185">Reference proteome</keyword>
<keyword id="KW-0949">S-adenosyl-L-methionine</keyword>
<keyword id="KW-0808">Transferase</keyword>
<gene>
    <name evidence="1" type="primary">cmoA</name>
    <name type="ordered locus">Swoo_2577</name>
</gene>
<sequence length="243" mass="27242">MNSSQDTIYAQACENISDFQFDEKVAGVFNDMIRRSVPGYGQIIQTLGELAHKYVTPDSHVYDLGCSLGAATLSIRRKIGSRNCTIIAVDNSQSMIERCQENLGAYVSDTPVDLVCGDIRDIKIENASMVVLNFTMQFLAPNDRDALVNKIYKGLKPGGILVLSEKLNFEDSSVQSLLDDLHLDFKRANGYSELEISQKRSSLEHVMKPDTLAQHEMRLKAQGFTHFNLWFQCFNFASMVAIK</sequence>
<feature type="chain" id="PRO_1000201370" description="Carboxy-S-adenosyl-L-methionine synthase">
    <location>
        <begin position="1"/>
        <end position="243"/>
    </location>
</feature>
<feature type="binding site" evidence="1">
    <location>
        <position position="40"/>
    </location>
    <ligand>
        <name>S-adenosyl-L-methionine</name>
        <dbReference type="ChEBI" id="CHEBI:59789"/>
    </ligand>
</feature>
<feature type="binding site" evidence="1">
    <location>
        <begin position="65"/>
        <end position="67"/>
    </location>
    <ligand>
        <name>S-adenosyl-L-methionine</name>
        <dbReference type="ChEBI" id="CHEBI:59789"/>
    </ligand>
</feature>
<feature type="binding site" evidence="1">
    <location>
        <begin position="90"/>
        <end position="91"/>
    </location>
    <ligand>
        <name>S-adenosyl-L-methionine</name>
        <dbReference type="ChEBI" id="CHEBI:59789"/>
    </ligand>
</feature>
<feature type="binding site" evidence="1">
    <location>
        <begin position="118"/>
        <end position="119"/>
    </location>
    <ligand>
        <name>S-adenosyl-L-methionine</name>
        <dbReference type="ChEBI" id="CHEBI:59789"/>
    </ligand>
</feature>
<feature type="binding site" evidence="1">
    <location>
        <position position="133"/>
    </location>
    <ligand>
        <name>S-adenosyl-L-methionine</name>
        <dbReference type="ChEBI" id="CHEBI:59789"/>
    </ligand>
</feature>
<feature type="binding site" evidence="1">
    <location>
        <position position="200"/>
    </location>
    <ligand>
        <name>S-adenosyl-L-methionine</name>
        <dbReference type="ChEBI" id="CHEBI:59789"/>
    </ligand>
</feature>